<feature type="chain" id="PRO_0000177228" description="Large ribosomal subunit protein bL20">
    <location>
        <begin position="1"/>
        <end position="118"/>
    </location>
</feature>
<evidence type="ECO:0000255" key="1">
    <source>
        <dbReference type="HAMAP-Rule" id="MF_00382"/>
    </source>
</evidence>
<evidence type="ECO:0000305" key="2"/>
<dbReference type="EMBL" id="BA000033">
    <property type="protein sequence ID" value="BAB95487.1"/>
    <property type="molecule type" value="Genomic_DNA"/>
</dbReference>
<dbReference type="RefSeq" id="WP_001138360.1">
    <property type="nucleotide sequence ID" value="NC_003923.1"/>
</dbReference>
<dbReference type="PDB" id="8Y36">
    <property type="method" value="EM"/>
    <property type="resolution" value="2.65 A"/>
    <property type="chains" value="O=2-117"/>
</dbReference>
<dbReference type="PDB" id="8Y37">
    <property type="method" value="EM"/>
    <property type="resolution" value="2.53 A"/>
    <property type="chains" value="O=2-117"/>
</dbReference>
<dbReference type="PDB" id="8Y38">
    <property type="method" value="EM"/>
    <property type="resolution" value="2.58 A"/>
    <property type="chains" value="O=2-117"/>
</dbReference>
<dbReference type="PDB" id="8Y39">
    <property type="method" value="EM"/>
    <property type="resolution" value="3.60 A"/>
    <property type="chains" value="O=2-117"/>
</dbReference>
<dbReference type="PDBsum" id="8Y36"/>
<dbReference type="PDBsum" id="8Y37"/>
<dbReference type="PDBsum" id="8Y38"/>
<dbReference type="PDBsum" id="8Y39"/>
<dbReference type="EMDB" id="EMD-38873"/>
<dbReference type="EMDB" id="EMD-38874"/>
<dbReference type="EMDB" id="EMD-38875"/>
<dbReference type="EMDB" id="EMD-38876"/>
<dbReference type="SMR" id="P66109"/>
<dbReference type="GeneID" id="98346040"/>
<dbReference type="KEGG" id="sam:MW1622"/>
<dbReference type="HOGENOM" id="CLU_123265_0_1_9"/>
<dbReference type="GO" id="GO:1990904">
    <property type="term" value="C:ribonucleoprotein complex"/>
    <property type="evidence" value="ECO:0007669"/>
    <property type="project" value="UniProtKB-KW"/>
</dbReference>
<dbReference type="GO" id="GO:0005840">
    <property type="term" value="C:ribosome"/>
    <property type="evidence" value="ECO:0007669"/>
    <property type="project" value="UniProtKB-KW"/>
</dbReference>
<dbReference type="GO" id="GO:0019843">
    <property type="term" value="F:rRNA binding"/>
    <property type="evidence" value="ECO:0007669"/>
    <property type="project" value="UniProtKB-UniRule"/>
</dbReference>
<dbReference type="GO" id="GO:0003735">
    <property type="term" value="F:structural constituent of ribosome"/>
    <property type="evidence" value="ECO:0007669"/>
    <property type="project" value="InterPro"/>
</dbReference>
<dbReference type="GO" id="GO:0000027">
    <property type="term" value="P:ribosomal large subunit assembly"/>
    <property type="evidence" value="ECO:0007669"/>
    <property type="project" value="UniProtKB-UniRule"/>
</dbReference>
<dbReference type="GO" id="GO:0006412">
    <property type="term" value="P:translation"/>
    <property type="evidence" value="ECO:0007669"/>
    <property type="project" value="InterPro"/>
</dbReference>
<dbReference type="CDD" id="cd07026">
    <property type="entry name" value="Ribosomal_L20"/>
    <property type="match status" value="1"/>
</dbReference>
<dbReference type="FunFam" id="1.10.1900.20:FF:000001">
    <property type="entry name" value="50S ribosomal protein L20"/>
    <property type="match status" value="1"/>
</dbReference>
<dbReference type="Gene3D" id="6.10.160.10">
    <property type="match status" value="1"/>
</dbReference>
<dbReference type="Gene3D" id="1.10.1900.20">
    <property type="entry name" value="Ribosomal protein L20"/>
    <property type="match status" value="1"/>
</dbReference>
<dbReference type="HAMAP" id="MF_00382">
    <property type="entry name" value="Ribosomal_bL20"/>
    <property type="match status" value="1"/>
</dbReference>
<dbReference type="InterPro" id="IPR005813">
    <property type="entry name" value="Ribosomal_bL20"/>
</dbReference>
<dbReference type="InterPro" id="IPR049946">
    <property type="entry name" value="RIBOSOMAL_L20_CS"/>
</dbReference>
<dbReference type="InterPro" id="IPR035566">
    <property type="entry name" value="Ribosomal_protein_bL20_C"/>
</dbReference>
<dbReference type="NCBIfam" id="TIGR01032">
    <property type="entry name" value="rplT_bact"/>
    <property type="match status" value="1"/>
</dbReference>
<dbReference type="PANTHER" id="PTHR10986">
    <property type="entry name" value="39S RIBOSOMAL PROTEIN L20"/>
    <property type="match status" value="1"/>
</dbReference>
<dbReference type="Pfam" id="PF00453">
    <property type="entry name" value="Ribosomal_L20"/>
    <property type="match status" value="1"/>
</dbReference>
<dbReference type="PRINTS" id="PR00062">
    <property type="entry name" value="RIBOSOMALL20"/>
</dbReference>
<dbReference type="SUPFAM" id="SSF74731">
    <property type="entry name" value="Ribosomal protein L20"/>
    <property type="match status" value="1"/>
</dbReference>
<dbReference type="PROSITE" id="PS00937">
    <property type="entry name" value="RIBOSOMAL_L20"/>
    <property type="match status" value="1"/>
</dbReference>
<proteinExistence type="evidence at protein level"/>
<gene>
    <name evidence="1" type="primary">rplT</name>
    <name type="ordered locus">MW1622</name>
</gene>
<keyword id="KW-0002">3D-structure</keyword>
<keyword id="KW-0687">Ribonucleoprotein</keyword>
<keyword id="KW-0689">Ribosomal protein</keyword>
<keyword id="KW-0694">RNA-binding</keyword>
<keyword id="KW-0699">rRNA-binding</keyword>
<comment type="function">
    <text evidence="1">Binds directly to 23S ribosomal RNA and is necessary for the in vitro assembly process of the 50S ribosomal subunit. It is not involved in the protein synthesizing functions of that subunit.</text>
</comment>
<comment type="similarity">
    <text evidence="1">Belongs to the bacterial ribosomal protein bL20 family.</text>
</comment>
<sequence length="118" mass="13686">MPRVKGGTVTRARRKKTIKLAKGYFGSKHTLYKVAKQQVMKSGQYAFRDRRQRKRDFRKLWITRINAAARQHEMSYSRLMNGLKKAGIDINRKMLSEIAISDEKAFAQLVTKAKDALK</sequence>
<accession>P66109</accession>
<accession>Q99TI3</accession>
<reference key="1">
    <citation type="journal article" date="2002" name="Lancet">
        <title>Genome and virulence determinants of high virulence community-acquired MRSA.</title>
        <authorList>
            <person name="Baba T."/>
            <person name="Takeuchi F."/>
            <person name="Kuroda M."/>
            <person name="Yuzawa H."/>
            <person name="Aoki K."/>
            <person name="Oguchi A."/>
            <person name="Nagai Y."/>
            <person name="Iwama N."/>
            <person name="Asano K."/>
            <person name="Naimi T."/>
            <person name="Kuroda H."/>
            <person name="Cui L."/>
            <person name="Yamamoto K."/>
            <person name="Hiramatsu K."/>
        </authorList>
    </citation>
    <scope>NUCLEOTIDE SEQUENCE [LARGE SCALE GENOMIC DNA]</scope>
    <source>
        <strain>MW2</strain>
    </source>
</reference>
<organism>
    <name type="scientific">Staphylococcus aureus (strain MW2)</name>
    <dbReference type="NCBI Taxonomy" id="196620"/>
    <lineage>
        <taxon>Bacteria</taxon>
        <taxon>Bacillati</taxon>
        <taxon>Bacillota</taxon>
        <taxon>Bacilli</taxon>
        <taxon>Bacillales</taxon>
        <taxon>Staphylococcaceae</taxon>
        <taxon>Staphylococcus</taxon>
    </lineage>
</organism>
<protein>
    <recommendedName>
        <fullName evidence="1">Large ribosomal subunit protein bL20</fullName>
    </recommendedName>
    <alternativeName>
        <fullName evidence="2">50S ribosomal protein L20</fullName>
    </alternativeName>
</protein>
<name>RL20_STAAW</name>